<sequence>MLTERQLLILQTIIDDFIGSAQPVGSRTLAKKDEITYSSATIRNEMADLEELGFIEKTHSSSGRVPSEKGYRFYVDHLLAPQNLPNDEIVQIKDLFVERIFEAEKIAQQSAQILSELTNYTAIVLGPKLSTNKLKNVQIVPLDRQTAVAIIVTDTGHVQSKTITVPESVDLSDLEKMVNILNEKLSGVPMSELHNKIFKEIVTVLRGYVHNYDSAIKMLDGTFQVPLSEKIYFGGKANMLSQPEFHDIHKVRSLLTMIDNEAEFYDILRHKQVGIQVKIGRENSATAMEDCSLISATYSIGEEQLGTIAILGPTRMQYSRVISLLQLFTRQFTDGLKK</sequence>
<accession>Q81LS0</accession>
<accession>Q6HT75</accession>
<accession>Q6KMG5</accession>
<keyword id="KW-1185">Reference proteome</keyword>
<keyword id="KW-0678">Repressor</keyword>
<keyword id="KW-0346">Stress response</keyword>
<keyword id="KW-0804">Transcription</keyword>
<keyword id="KW-0805">Transcription regulation</keyword>
<evidence type="ECO:0000255" key="1">
    <source>
        <dbReference type="HAMAP-Rule" id="MF_00081"/>
    </source>
</evidence>
<dbReference type="EMBL" id="AE016879">
    <property type="protein sequence ID" value="AAP28250.1"/>
    <property type="molecule type" value="Genomic_DNA"/>
</dbReference>
<dbReference type="EMBL" id="AE017334">
    <property type="protein sequence ID" value="AAT33662.1"/>
    <property type="molecule type" value="Genomic_DNA"/>
</dbReference>
<dbReference type="EMBL" id="AE017225">
    <property type="protein sequence ID" value="AAT56514.1"/>
    <property type="molecule type" value="Genomic_DNA"/>
</dbReference>
<dbReference type="RefSeq" id="NP_846764.1">
    <property type="nucleotide sequence ID" value="NC_003997.3"/>
</dbReference>
<dbReference type="RefSeq" id="WP_000954959.1">
    <property type="nucleotide sequence ID" value="NZ_WXXJ01000027.1"/>
</dbReference>
<dbReference type="RefSeq" id="YP_030463.1">
    <property type="nucleotide sequence ID" value="NC_005945.1"/>
</dbReference>
<dbReference type="SMR" id="Q81LS0"/>
<dbReference type="IntAct" id="Q81LS0">
    <property type="interactions" value="2"/>
</dbReference>
<dbReference type="STRING" id="261594.GBAA_4541"/>
<dbReference type="DNASU" id="1088273"/>
<dbReference type="GeneID" id="45024193"/>
<dbReference type="KEGG" id="ban:BA_4541"/>
<dbReference type="KEGG" id="bar:GBAA_4541"/>
<dbReference type="KEGG" id="bat:BAS4215"/>
<dbReference type="PATRIC" id="fig|198094.11.peg.4509"/>
<dbReference type="eggNOG" id="COG1420">
    <property type="taxonomic scope" value="Bacteria"/>
</dbReference>
<dbReference type="HOGENOM" id="CLU_050019_1_0_9"/>
<dbReference type="OMA" id="GPKRMDY"/>
<dbReference type="OrthoDB" id="9783139at2"/>
<dbReference type="Proteomes" id="UP000000427">
    <property type="component" value="Chromosome"/>
</dbReference>
<dbReference type="Proteomes" id="UP000000594">
    <property type="component" value="Chromosome"/>
</dbReference>
<dbReference type="GO" id="GO:0003677">
    <property type="term" value="F:DNA binding"/>
    <property type="evidence" value="ECO:0007669"/>
    <property type="project" value="InterPro"/>
</dbReference>
<dbReference type="GO" id="GO:0045892">
    <property type="term" value="P:negative regulation of DNA-templated transcription"/>
    <property type="evidence" value="ECO:0007669"/>
    <property type="project" value="UniProtKB-UniRule"/>
</dbReference>
<dbReference type="FunFam" id="1.10.10.10:FF:000049">
    <property type="entry name" value="Heat-inducible transcription repressor HrcA"/>
    <property type="match status" value="1"/>
</dbReference>
<dbReference type="FunFam" id="3.30.390.60:FF:000001">
    <property type="entry name" value="Heat-inducible transcription repressor HrcA"/>
    <property type="match status" value="1"/>
</dbReference>
<dbReference type="Gene3D" id="3.30.450.40">
    <property type="match status" value="1"/>
</dbReference>
<dbReference type="Gene3D" id="3.30.390.60">
    <property type="entry name" value="Heat-inducible transcription repressor hrca homolog, domain 3"/>
    <property type="match status" value="1"/>
</dbReference>
<dbReference type="Gene3D" id="1.10.10.10">
    <property type="entry name" value="Winged helix-like DNA-binding domain superfamily/Winged helix DNA-binding domain"/>
    <property type="match status" value="1"/>
</dbReference>
<dbReference type="HAMAP" id="MF_00081">
    <property type="entry name" value="HrcA"/>
    <property type="match status" value="1"/>
</dbReference>
<dbReference type="InterPro" id="IPR029016">
    <property type="entry name" value="GAF-like_dom_sf"/>
</dbReference>
<dbReference type="InterPro" id="IPR002571">
    <property type="entry name" value="HrcA"/>
</dbReference>
<dbReference type="InterPro" id="IPR021153">
    <property type="entry name" value="HrcA_C"/>
</dbReference>
<dbReference type="InterPro" id="IPR036388">
    <property type="entry name" value="WH-like_DNA-bd_sf"/>
</dbReference>
<dbReference type="InterPro" id="IPR036390">
    <property type="entry name" value="WH_DNA-bd_sf"/>
</dbReference>
<dbReference type="InterPro" id="IPR023120">
    <property type="entry name" value="WHTH_transcript_rep_HrcA_IDD"/>
</dbReference>
<dbReference type="NCBIfam" id="TIGR00331">
    <property type="entry name" value="hrcA"/>
    <property type="match status" value="1"/>
</dbReference>
<dbReference type="PANTHER" id="PTHR34824">
    <property type="entry name" value="HEAT-INDUCIBLE TRANSCRIPTION REPRESSOR HRCA"/>
    <property type="match status" value="1"/>
</dbReference>
<dbReference type="PANTHER" id="PTHR34824:SF1">
    <property type="entry name" value="HEAT-INDUCIBLE TRANSCRIPTION REPRESSOR HRCA"/>
    <property type="match status" value="1"/>
</dbReference>
<dbReference type="Pfam" id="PF01628">
    <property type="entry name" value="HrcA"/>
    <property type="match status" value="1"/>
</dbReference>
<dbReference type="PIRSF" id="PIRSF005485">
    <property type="entry name" value="HrcA"/>
    <property type="match status" value="1"/>
</dbReference>
<dbReference type="SUPFAM" id="SSF55781">
    <property type="entry name" value="GAF domain-like"/>
    <property type="match status" value="1"/>
</dbReference>
<dbReference type="SUPFAM" id="SSF46785">
    <property type="entry name" value="Winged helix' DNA-binding domain"/>
    <property type="match status" value="1"/>
</dbReference>
<reference key="1">
    <citation type="journal article" date="2003" name="Nature">
        <title>The genome sequence of Bacillus anthracis Ames and comparison to closely related bacteria.</title>
        <authorList>
            <person name="Read T.D."/>
            <person name="Peterson S.N."/>
            <person name="Tourasse N.J."/>
            <person name="Baillie L.W."/>
            <person name="Paulsen I.T."/>
            <person name="Nelson K.E."/>
            <person name="Tettelin H."/>
            <person name="Fouts D.E."/>
            <person name="Eisen J.A."/>
            <person name="Gill S.R."/>
            <person name="Holtzapple E.K."/>
            <person name="Okstad O.A."/>
            <person name="Helgason E."/>
            <person name="Rilstone J."/>
            <person name="Wu M."/>
            <person name="Kolonay J.F."/>
            <person name="Beanan M.J."/>
            <person name="Dodson R.J."/>
            <person name="Brinkac L.M."/>
            <person name="Gwinn M.L."/>
            <person name="DeBoy R.T."/>
            <person name="Madpu R."/>
            <person name="Daugherty S.C."/>
            <person name="Durkin A.S."/>
            <person name="Haft D.H."/>
            <person name="Nelson W.C."/>
            <person name="Peterson J.D."/>
            <person name="Pop M."/>
            <person name="Khouri H.M."/>
            <person name="Radune D."/>
            <person name="Benton J.L."/>
            <person name="Mahamoud Y."/>
            <person name="Jiang L."/>
            <person name="Hance I.R."/>
            <person name="Weidman J.F."/>
            <person name="Berry K.J."/>
            <person name="Plaut R.D."/>
            <person name="Wolf A.M."/>
            <person name="Watkins K.L."/>
            <person name="Nierman W.C."/>
            <person name="Hazen A."/>
            <person name="Cline R.T."/>
            <person name="Redmond C."/>
            <person name="Thwaite J.E."/>
            <person name="White O."/>
            <person name="Salzberg S.L."/>
            <person name="Thomason B."/>
            <person name="Friedlander A.M."/>
            <person name="Koehler T.M."/>
            <person name="Hanna P.C."/>
            <person name="Kolstoe A.-B."/>
            <person name="Fraser C.M."/>
        </authorList>
    </citation>
    <scope>NUCLEOTIDE SEQUENCE [LARGE SCALE GENOMIC DNA]</scope>
    <source>
        <strain>Ames / isolate Porton</strain>
    </source>
</reference>
<reference key="2">
    <citation type="journal article" date="2009" name="J. Bacteriol.">
        <title>The complete genome sequence of Bacillus anthracis Ames 'Ancestor'.</title>
        <authorList>
            <person name="Ravel J."/>
            <person name="Jiang L."/>
            <person name="Stanley S.T."/>
            <person name="Wilson M.R."/>
            <person name="Decker R.S."/>
            <person name="Read T.D."/>
            <person name="Worsham P."/>
            <person name="Keim P.S."/>
            <person name="Salzberg S.L."/>
            <person name="Fraser-Liggett C.M."/>
            <person name="Rasko D.A."/>
        </authorList>
    </citation>
    <scope>NUCLEOTIDE SEQUENCE [LARGE SCALE GENOMIC DNA]</scope>
    <source>
        <strain>Ames ancestor</strain>
    </source>
</reference>
<reference key="3">
    <citation type="submission" date="2004-01" db="EMBL/GenBank/DDBJ databases">
        <title>Complete genome sequence of Bacillus anthracis Sterne.</title>
        <authorList>
            <person name="Brettin T.S."/>
            <person name="Bruce D."/>
            <person name="Challacombe J.F."/>
            <person name="Gilna P."/>
            <person name="Han C."/>
            <person name="Hill K."/>
            <person name="Hitchcock P."/>
            <person name="Jackson P."/>
            <person name="Keim P."/>
            <person name="Longmire J."/>
            <person name="Lucas S."/>
            <person name="Okinaka R."/>
            <person name="Richardson P."/>
            <person name="Rubin E."/>
            <person name="Tice H."/>
        </authorList>
    </citation>
    <scope>NUCLEOTIDE SEQUENCE [LARGE SCALE GENOMIC DNA]</scope>
    <source>
        <strain>Sterne</strain>
    </source>
</reference>
<organism>
    <name type="scientific">Bacillus anthracis</name>
    <dbReference type="NCBI Taxonomy" id="1392"/>
    <lineage>
        <taxon>Bacteria</taxon>
        <taxon>Bacillati</taxon>
        <taxon>Bacillota</taxon>
        <taxon>Bacilli</taxon>
        <taxon>Bacillales</taxon>
        <taxon>Bacillaceae</taxon>
        <taxon>Bacillus</taxon>
        <taxon>Bacillus cereus group</taxon>
    </lineage>
</organism>
<comment type="function">
    <text evidence="1">Negative regulator of class I heat shock genes (grpE-dnaK-dnaJ and groELS operons). Prevents heat-shock induction of these operons.</text>
</comment>
<comment type="similarity">
    <text evidence="1">Belongs to the HrcA family.</text>
</comment>
<name>HRCA_BACAN</name>
<protein>
    <recommendedName>
        <fullName evidence="1">Heat-inducible transcription repressor HrcA</fullName>
    </recommendedName>
</protein>
<gene>
    <name evidence="1" type="primary">hrcA</name>
    <name type="ordered locus">BA_4541</name>
    <name type="ordered locus">GBAA_4541</name>
    <name type="ordered locus">BAS4215</name>
</gene>
<feature type="chain" id="PRO_0000182440" description="Heat-inducible transcription repressor HrcA">
    <location>
        <begin position="1"/>
        <end position="338"/>
    </location>
</feature>
<proteinExistence type="inferred from homology"/>